<gene>
    <name evidence="1" type="primary">rsmJ</name>
    <name type="ordered locus">Ping_2836</name>
</gene>
<sequence length="253" mass="28157">MDIPLICNDSALSQKAKILRKKWGFLSTQSDHFQLHLLPEYLALEQKDDPKQGLVFVDFVSGSVAHRRKFGGGKGQAIAKAIGLKPGVQVDVIDATAGLGRDAFVLASLGCNVTMIERSAVAAALLEDGLERAYLNLEIGTWMKQRMRLHFGSASEYLQHHQTGVVYLDPMFPHKKKSALVKKEMRVFQGVVGEDLDADSLLEAALNAARYRVVVKRPDYAPFLNDKKPTMSIKTKKNRFDVYVKQAMPQNKS</sequence>
<proteinExistence type="inferred from homology"/>
<name>RSMJ_PSYIN</name>
<accession>A1SYH7</accession>
<dbReference type="EC" id="2.1.1.242" evidence="1"/>
<dbReference type="EMBL" id="CP000510">
    <property type="protein sequence ID" value="ABM04542.1"/>
    <property type="molecule type" value="Genomic_DNA"/>
</dbReference>
<dbReference type="RefSeq" id="WP_011771096.1">
    <property type="nucleotide sequence ID" value="NC_008709.1"/>
</dbReference>
<dbReference type="SMR" id="A1SYH7"/>
<dbReference type="STRING" id="357804.Ping_2836"/>
<dbReference type="KEGG" id="pin:Ping_2836"/>
<dbReference type="eggNOG" id="COG0742">
    <property type="taxonomic scope" value="Bacteria"/>
</dbReference>
<dbReference type="HOGENOM" id="CLU_076324_0_1_6"/>
<dbReference type="OrthoDB" id="3191794at2"/>
<dbReference type="Proteomes" id="UP000000639">
    <property type="component" value="Chromosome"/>
</dbReference>
<dbReference type="GO" id="GO:0005737">
    <property type="term" value="C:cytoplasm"/>
    <property type="evidence" value="ECO:0007669"/>
    <property type="project" value="UniProtKB-SubCell"/>
</dbReference>
<dbReference type="GO" id="GO:0008990">
    <property type="term" value="F:rRNA (guanine-N2-)-methyltransferase activity"/>
    <property type="evidence" value="ECO:0007669"/>
    <property type="project" value="UniProtKB-UniRule"/>
</dbReference>
<dbReference type="Gene3D" id="3.40.50.150">
    <property type="entry name" value="Vaccinia Virus protein VP39"/>
    <property type="match status" value="1"/>
</dbReference>
<dbReference type="Gene3D" id="3.40.1630.10">
    <property type="entry name" value="YhiQ-like domain"/>
    <property type="match status" value="1"/>
</dbReference>
<dbReference type="HAMAP" id="MF_01523">
    <property type="entry name" value="16SrRNA_methyltr_J"/>
    <property type="match status" value="1"/>
</dbReference>
<dbReference type="InterPro" id="IPR007536">
    <property type="entry name" value="16SrRNA_methylTrfase_J"/>
</dbReference>
<dbReference type="InterPro" id="IPR029063">
    <property type="entry name" value="SAM-dependent_MTases_sf"/>
</dbReference>
<dbReference type="PANTHER" id="PTHR36112">
    <property type="entry name" value="RIBOSOMAL RNA SMALL SUBUNIT METHYLTRANSFERASE J"/>
    <property type="match status" value="1"/>
</dbReference>
<dbReference type="PANTHER" id="PTHR36112:SF1">
    <property type="entry name" value="RIBOSOMAL RNA SMALL SUBUNIT METHYLTRANSFERASE J"/>
    <property type="match status" value="1"/>
</dbReference>
<dbReference type="Pfam" id="PF04445">
    <property type="entry name" value="SAM_MT"/>
    <property type="match status" value="1"/>
</dbReference>
<dbReference type="SUPFAM" id="SSF53335">
    <property type="entry name" value="S-adenosyl-L-methionine-dependent methyltransferases"/>
    <property type="match status" value="1"/>
</dbReference>
<keyword id="KW-0963">Cytoplasm</keyword>
<keyword id="KW-0489">Methyltransferase</keyword>
<keyword id="KW-1185">Reference proteome</keyword>
<keyword id="KW-0698">rRNA processing</keyword>
<keyword id="KW-0949">S-adenosyl-L-methionine</keyword>
<keyword id="KW-0808">Transferase</keyword>
<protein>
    <recommendedName>
        <fullName evidence="1">Ribosomal RNA small subunit methyltransferase J</fullName>
        <ecNumber evidence="1">2.1.1.242</ecNumber>
    </recommendedName>
    <alternativeName>
        <fullName evidence="1">16S rRNA m2G1516 methyltransferase</fullName>
    </alternativeName>
    <alternativeName>
        <fullName evidence="1">rRNA (guanine-N(2)-)-methyltransferase</fullName>
    </alternativeName>
</protein>
<comment type="function">
    <text evidence="1">Specifically methylates the guanosine in position 1516 of 16S rRNA.</text>
</comment>
<comment type="catalytic activity">
    <reaction evidence="1">
        <text>guanosine(1516) in 16S rRNA + S-adenosyl-L-methionine = N(2)-methylguanosine(1516) in 16S rRNA + S-adenosyl-L-homocysteine + H(+)</text>
        <dbReference type="Rhea" id="RHEA:43220"/>
        <dbReference type="Rhea" id="RHEA-COMP:10412"/>
        <dbReference type="Rhea" id="RHEA-COMP:10413"/>
        <dbReference type="ChEBI" id="CHEBI:15378"/>
        <dbReference type="ChEBI" id="CHEBI:57856"/>
        <dbReference type="ChEBI" id="CHEBI:59789"/>
        <dbReference type="ChEBI" id="CHEBI:74269"/>
        <dbReference type="ChEBI" id="CHEBI:74481"/>
        <dbReference type="EC" id="2.1.1.242"/>
    </reaction>
</comment>
<comment type="subcellular location">
    <subcellularLocation>
        <location evidence="1">Cytoplasm</location>
    </subcellularLocation>
</comment>
<comment type="similarity">
    <text evidence="1">Belongs to the methyltransferase superfamily. RsmJ family.</text>
</comment>
<feature type="chain" id="PRO_0000292642" description="Ribosomal RNA small subunit methyltransferase J">
    <location>
        <begin position="1"/>
        <end position="253"/>
    </location>
</feature>
<feature type="binding site" evidence="1">
    <location>
        <begin position="101"/>
        <end position="102"/>
    </location>
    <ligand>
        <name>S-adenosyl-L-methionine</name>
        <dbReference type="ChEBI" id="CHEBI:59789"/>
    </ligand>
</feature>
<feature type="binding site" evidence="1">
    <location>
        <begin position="117"/>
        <end position="118"/>
    </location>
    <ligand>
        <name>S-adenosyl-L-methionine</name>
        <dbReference type="ChEBI" id="CHEBI:59789"/>
    </ligand>
</feature>
<feature type="binding site" evidence="1">
    <location>
        <position position="169"/>
    </location>
    <ligand>
        <name>S-adenosyl-L-methionine</name>
        <dbReference type="ChEBI" id="CHEBI:59789"/>
    </ligand>
</feature>
<evidence type="ECO:0000255" key="1">
    <source>
        <dbReference type="HAMAP-Rule" id="MF_01523"/>
    </source>
</evidence>
<organism>
    <name type="scientific">Psychromonas ingrahamii (strain DSM 17664 / CCUG 51855 / 37)</name>
    <dbReference type="NCBI Taxonomy" id="357804"/>
    <lineage>
        <taxon>Bacteria</taxon>
        <taxon>Pseudomonadati</taxon>
        <taxon>Pseudomonadota</taxon>
        <taxon>Gammaproteobacteria</taxon>
        <taxon>Alteromonadales</taxon>
        <taxon>Psychromonadaceae</taxon>
        <taxon>Psychromonas</taxon>
    </lineage>
</organism>
<reference key="1">
    <citation type="journal article" date="2008" name="BMC Genomics">
        <title>Genomics of an extreme psychrophile, Psychromonas ingrahamii.</title>
        <authorList>
            <person name="Riley M."/>
            <person name="Staley J.T."/>
            <person name="Danchin A."/>
            <person name="Wang T.Z."/>
            <person name="Brettin T.S."/>
            <person name="Hauser L.J."/>
            <person name="Land M.L."/>
            <person name="Thompson L.S."/>
        </authorList>
    </citation>
    <scope>NUCLEOTIDE SEQUENCE [LARGE SCALE GENOMIC DNA]</scope>
    <source>
        <strain>DSM 17664 / CCUG 51855 / 37</strain>
    </source>
</reference>